<protein>
    <recommendedName>
        <fullName evidence="1">Cyclic pyranopterin monophosphate synthase</fullName>
        <ecNumber evidence="1">4.6.1.17</ecNumber>
    </recommendedName>
    <alternativeName>
        <fullName evidence="1">Molybdenum cofactor biosynthesis protein C</fullName>
    </alternativeName>
</protein>
<proteinExistence type="inferred from homology"/>
<name>MOAC_YERP3</name>
<sequence>MTQLTHINTAGEAHMVDVSAKNETVREARAEAFVDMQAATLAMIIDGSHHKGDVFATARIAGIQAAKKTWELIPLCHPLLLTKVEVKLEAQPEHNRVRIETCCRLTGKTGVEMEALTAASVAALTIYDMCKAVQKDMIIGPVRLLTKSGGKSGDFKVDI</sequence>
<evidence type="ECO:0000255" key="1">
    <source>
        <dbReference type="HAMAP-Rule" id="MF_01224"/>
    </source>
</evidence>
<accession>A7FKM0</accession>
<dbReference type="EC" id="4.6.1.17" evidence="1"/>
<dbReference type="EMBL" id="CP000720">
    <property type="protein sequence ID" value="ABS47820.1"/>
    <property type="molecule type" value="Genomic_DNA"/>
</dbReference>
<dbReference type="RefSeq" id="WP_002210772.1">
    <property type="nucleotide sequence ID" value="NC_009708.1"/>
</dbReference>
<dbReference type="SMR" id="A7FKM0"/>
<dbReference type="GeneID" id="57977299"/>
<dbReference type="KEGG" id="ypi:YpsIP31758_2835"/>
<dbReference type="HOGENOM" id="CLU_074693_1_1_6"/>
<dbReference type="UniPathway" id="UPA00344"/>
<dbReference type="Proteomes" id="UP000002412">
    <property type="component" value="Chromosome"/>
</dbReference>
<dbReference type="GO" id="GO:0061799">
    <property type="term" value="F:cyclic pyranopterin monophosphate synthase activity"/>
    <property type="evidence" value="ECO:0007669"/>
    <property type="project" value="UniProtKB-UniRule"/>
</dbReference>
<dbReference type="GO" id="GO:0006777">
    <property type="term" value="P:Mo-molybdopterin cofactor biosynthetic process"/>
    <property type="evidence" value="ECO:0007669"/>
    <property type="project" value="UniProtKB-UniRule"/>
</dbReference>
<dbReference type="CDD" id="cd01420">
    <property type="entry name" value="MoaC_PE"/>
    <property type="match status" value="1"/>
</dbReference>
<dbReference type="FunFam" id="3.30.70.640:FF:000001">
    <property type="entry name" value="Cyclic pyranopterin monophosphate synthase"/>
    <property type="match status" value="1"/>
</dbReference>
<dbReference type="Gene3D" id="3.30.70.640">
    <property type="entry name" value="Molybdopterin cofactor biosynthesis C (MoaC) domain"/>
    <property type="match status" value="1"/>
</dbReference>
<dbReference type="HAMAP" id="MF_01224_B">
    <property type="entry name" value="MoaC_B"/>
    <property type="match status" value="1"/>
</dbReference>
<dbReference type="InterPro" id="IPR023045">
    <property type="entry name" value="MoaC"/>
</dbReference>
<dbReference type="InterPro" id="IPR047594">
    <property type="entry name" value="MoaC_bact/euk"/>
</dbReference>
<dbReference type="InterPro" id="IPR036522">
    <property type="entry name" value="MoaC_sf"/>
</dbReference>
<dbReference type="InterPro" id="IPR050105">
    <property type="entry name" value="MoCo_biosynth_MoaA/MoaC"/>
</dbReference>
<dbReference type="InterPro" id="IPR002820">
    <property type="entry name" value="Mopterin_CF_biosynth-C_dom"/>
</dbReference>
<dbReference type="NCBIfam" id="TIGR00581">
    <property type="entry name" value="moaC"/>
    <property type="match status" value="1"/>
</dbReference>
<dbReference type="NCBIfam" id="NF006870">
    <property type="entry name" value="PRK09364.1"/>
    <property type="match status" value="1"/>
</dbReference>
<dbReference type="PANTHER" id="PTHR22960">
    <property type="entry name" value="MOLYBDOPTERIN COFACTOR SYNTHESIS PROTEIN A"/>
    <property type="match status" value="1"/>
</dbReference>
<dbReference type="Pfam" id="PF01967">
    <property type="entry name" value="MoaC"/>
    <property type="match status" value="1"/>
</dbReference>
<dbReference type="SUPFAM" id="SSF55040">
    <property type="entry name" value="Molybdenum cofactor biosynthesis protein C, MoaC"/>
    <property type="match status" value="1"/>
</dbReference>
<feature type="chain" id="PRO_1000066804" description="Cyclic pyranopterin monophosphate synthase">
    <location>
        <begin position="1"/>
        <end position="159"/>
    </location>
</feature>
<feature type="active site" evidence="1">
    <location>
        <position position="128"/>
    </location>
</feature>
<feature type="binding site" evidence="1">
    <location>
        <begin position="75"/>
        <end position="77"/>
    </location>
    <ligand>
        <name>substrate</name>
    </ligand>
</feature>
<feature type="binding site" evidence="1">
    <location>
        <begin position="113"/>
        <end position="114"/>
    </location>
    <ligand>
        <name>substrate</name>
    </ligand>
</feature>
<gene>
    <name evidence="1" type="primary">moaC</name>
    <name type="ordered locus">YpsIP31758_2835</name>
</gene>
<reference key="1">
    <citation type="journal article" date="2007" name="PLoS Genet.">
        <title>The complete genome sequence of Yersinia pseudotuberculosis IP31758, the causative agent of Far East scarlet-like fever.</title>
        <authorList>
            <person name="Eppinger M."/>
            <person name="Rosovitz M.J."/>
            <person name="Fricke W.F."/>
            <person name="Rasko D.A."/>
            <person name="Kokorina G."/>
            <person name="Fayolle C."/>
            <person name="Lindler L.E."/>
            <person name="Carniel E."/>
            <person name="Ravel J."/>
        </authorList>
    </citation>
    <scope>NUCLEOTIDE SEQUENCE [LARGE SCALE GENOMIC DNA]</scope>
    <source>
        <strain>IP 31758</strain>
    </source>
</reference>
<keyword id="KW-0456">Lyase</keyword>
<keyword id="KW-0501">Molybdenum cofactor biosynthesis</keyword>
<comment type="function">
    <text evidence="1">Catalyzes the conversion of (8S)-3',8-cyclo-7,8-dihydroguanosine 5'-triphosphate to cyclic pyranopterin monophosphate (cPMP).</text>
</comment>
<comment type="catalytic activity">
    <reaction evidence="1">
        <text>(8S)-3',8-cyclo-7,8-dihydroguanosine 5'-triphosphate = cyclic pyranopterin phosphate + diphosphate</text>
        <dbReference type="Rhea" id="RHEA:49580"/>
        <dbReference type="ChEBI" id="CHEBI:33019"/>
        <dbReference type="ChEBI" id="CHEBI:59648"/>
        <dbReference type="ChEBI" id="CHEBI:131766"/>
        <dbReference type="EC" id="4.6.1.17"/>
    </reaction>
</comment>
<comment type="pathway">
    <text evidence="1">Cofactor biosynthesis; molybdopterin biosynthesis.</text>
</comment>
<comment type="subunit">
    <text evidence="1">Homohexamer; trimer of dimers.</text>
</comment>
<comment type="similarity">
    <text evidence="1">Belongs to the MoaC family.</text>
</comment>
<organism>
    <name type="scientific">Yersinia pseudotuberculosis serotype O:1b (strain IP 31758)</name>
    <dbReference type="NCBI Taxonomy" id="349747"/>
    <lineage>
        <taxon>Bacteria</taxon>
        <taxon>Pseudomonadati</taxon>
        <taxon>Pseudomonadota</taxon>
        <taxon>Gammaproteobacteria</taxon>
        <taxon>Enterobacterales</taxon>
        <taxon>Yersiniaceae</taxon>
        <taxon>Yersinia</taxon>
    </lineage>
</organism>